<feature type="signal peptide" evidence="1">
    <location>
        <begin position="1"/>
        <end position="16"/>
    </location>
</feature>
<feature type="chain" id="PRO_0000018063" description="Probable spore germination lipoprotein YlaJ">
    <location>
        <begin position="17"/>
        <end position="209"/>
    </location>
</feature>
<feature type="region of interest" description="Disordered" evidence="2">
    <location>
        <begin position="26"/>
        <end position="54"/>
    </location>
</feature>
<feature type="region of interest" description="Disordered" evidence="2">
    <location>
        <begin position="165"/>
        <end position="209"/>
    </location>
</feature>
<feature type="compositionally biased region" description="Basic and acidic residues" evidence="2">
    <location>
        <begin position="28"/>
        <end position="54"/>
    </location>
</feature>
<feature type="compositionally biased region" description="Basic and acidic residues" evidence="2">
    <location>
        <begin position="183"/>
        <end position="209"/>
    </location>
</feature>
<feature type="lipid moiety-binding region" description="N-palmitoyl cysteine" evidence="1">
    <location>
        <position position="17"/>
    </location>
</feature>
<feature type="lipid moiety-binding region" description="S-diacylglycerol cysteine" evidence="1">
    <location>
        <position position="17"/>
    </location>
</feature>
<name>YLAJ_BACSU</name>
<sequence>MRILFIIIQLTLILSACAYQQGKQGQNVEKESTRQQETKPIHVKDTTQETKDNGTRTDIAKHLVSVAEKNPDVKDATAVVLGGYAVVGIDVDDTLDRSKVETIKYSVAQALKNDRYGANAVVIADPDTVSRLREMSREISEGHPVTGILDELAAIVGRVLPEVPNDVIDNEDEPQTKQQNDQLNRKQQQEMEKEQNDQSDHHMKKNNND</sequence>
<keyword id="KW-0309">Germination</keyword>
<keyword id="KW-0449">Lipoprotein</keyword>
<keyword id="KW-0472">Membrane</keyword>
<keyword id="KW-0564">Palmitate</keyword>
<keyword id="KW-1185">Reference proteome</keyword>
<keyword id="KW-0732">Signal</keyword>
<dbReference type="EMBL" id="Z97025">
    <property type="protein sequence ID" value="CAB09715.1"/>
    <property type="molecule type" value="Genomic_DNA"/>
</dbReference>
<dbReference type="EMBL" id="AL009126">
    <property type="protein sequence ID" value="CAB13353.1"/>
    <property type="molecule type" value="Genomic_DNA"/>
</dbReference>
<dbReference type="PIR" id="H69872">
    <property type="entry name" value="H69872"/>
</dbReference>
<dbReference type="RefSeq" id="NP_389363.1">
    <property type="nucleotide sequence ID" value="NC_000964.3"/>
</dbReference>
<dbReference type="RefSeq" id="WP_003232269.1">
    <property type="nucleotide sequence ID" value="NZ_OZ025638.1"/>
</dbReference>
<dbReference type="SMR" id="O07634"/>
<dbReference type="FunCoup" id="O07634">
    <property type="interactions" value="31"/>
</dbReference>
<dbReference type="STRING" id="224308.BSU14800"/>
<dbReference type="PaxDb" id="224308-BSU14800"/>
<dbReference type="EnsemblBacteria" id="CAB13353">
    <property type="protein sequence ID" value="CAB13353"/>
    <property type="gene ID" value="BSU_14800"/>
</dbReference>
<dbReference type="GeneID" id="935926"/>
<dbReference type="KEGG" id="bsu:BSU14800"/>
<dbReference type="PATRIC" id="fig|224308.179.peg.1614"/>
<dbReference type="eggNOG" id="ENOG5030RSQ">
    <property type="taxonomic scope" value="Bacteria"/>
</dbReference>
<dbReference type="InParanoid" id="O07634"/>
<dbReference type="OrthoDB" id="2381329at2"/>
<dbReference type="BioCyc" id="BSUB:BSU14800-MONOMER"/>
<dbReference type="Proteomes" id="UP000001570">
    <property type="component" value="Chromosome"/>
</dbReference>
<dbReference type="GO" id="GO:0016020">
    <property type="term" value="C:membrane"/>
    <property type="evidence" value="ECO:0007669"/>
    <property type="project" value="UniProtKB-KW"/>
</dbReference>
<dbReference type="GO" id="GO:0030435">
    <property type="term" value="P:sporulation resulting in formation of a cellular spore"/>
    <property type="evidence" value="ECO:0007669"/>
    <property type="project" value="InterPro"/>
</dbReference>
<dbReference type="InterPro" id="IPR014247">
    <property type="entry name" value="Spore_lipoprot_YhcN/YlaJ"/>
</dbReference>
<dbReference type="InterPro" id="IPR019076">
    <property type="entry name" value="Spore_lipoprot_YhcN/YlaJ-like"/>
</dbReference>
<dbReference type="NCBIfam" id="TIGR02898">
    <property type="entry name" value="spore_YhcN_YlaJ"/>
    <property type="match status" value="1"/>
</dbReference>
<dbReference type="Pfam" id="PF09580">
    <property type="entry name" value="Spore_YhcN_YlaJ"/>
    <property type="match status" value="1"/>
</dbReference>
<dbReference type="PROSITE" id="PS51257">
    <property type="entry name" value="PROKAR_LIPOPROTEIN"/>
    <property type="match status" value="1"/>
</dbReference>
<comment type="function">
    <text evidence="4">Probably contributes, directly or indirectly, to early events in germination.</text>
</comment>
<comment type="subcellular location">
    <subcellularLocation>
        <location evidence="3">Forespore inner membrane</location>
        <topology evidence="1">Lipid-anchor</topology>
    </subcellularLocation>
</comment>
<comment type="disruption phenotype">
    <text evidence="4">Mutant shows a reduced rate of spore germination in L-alanine.</text>
</comment>
<reference key="1">
    <citation type="submission" date="1997-06" db="EMBL/GenBank/DDBJ databases">
        <title>Bacillus subtilis chromosomal region downstream nprE.</title>
        <authorList>
            <person name="Purnelle B."/>
            <person name="Presecan E."/>
            <person name="Glaser P."/>
            <person name="Richou A."/>
            <person name="Danchin A."/>
            <person name="Goffeau A."/>
        </authorList>
    </citation>
    <scope>NUCLEOTIDE SEQUENCE [GENOMIC DNA]</scope>
    <source>
        <strain>168</strain>
    </source>
</reference>
<reference key="2">
    <citation type="journal article" date="1997" name="Nature">
        <title>The complete genome sequence of the Gram-positive bacterium Bacillus subtilis.</title>
        <authorList>
            <person name="Kunst F."/>
            <person name="Ogasawara N."/>
            <person name="Moszer I."/>
            <person name="Albertini A.M."/>
            <person name="Alloni G."/>
            <person name="Azevedo V."/>
            <person name="Bertero M.G."/>
            <person name="Bessieres P."/>
            <person name="Bolotin A."/>
            <person name="Borchert S."/>
            <person name="Borriss R."/>
            <person name="Boursier L."/>
            <person name="Brans A."/>
            <person name="Braun M."/>
            <person name="Brignell S.C."/>
            <person name="Bron S."/>
            <person name="Brouillet S."/>
            <person name="Bruschi C.V."/>
            <person name="Caldwell B."/>
            <person name="Capuano V."/>
            <person name="Carter N.M."/>
            <person name="Choi S.-K."/>
            <person name="Codani J.-J."/>
            <person name="Connerton I.F."/>
            <person name="Cummings N.J."/>
            <person name="Daniel R.A."/>
            <person name="Denizot F."/>
            <person name="Devine K.M."/>
            <person name="Duesterhoeft A."/>
            <person name="Ehrlich S.D."/>
            <person name="Emmerson P.T."/>
            <person name="Entian K.-D."/>
            <person name="Errington J."/>
            <person name="Fabret C."/>
            <person name="Ferrari E."/>
            <person name="Foulger D."/>
            <person name="Fritz C."/>
            <person name="Fujita M."/>
            <person name="Fujita Y."/>
            <person name="Fuma S."/>
            <person name="Galizzi A."/>
            <person name="Galleron N."/>
            <person name="Ghim S.-Y."/>
            <person name="Glaser P."/>
            <person name="Goffeau A."/>
            <person name="Golightly E.J."/>
            <person name="Grandi G."/>
            <person name="Guiseppi G."/>
            <person name="Guy B.J."/>
            <person name="Haga K."/>
            <person name="Haiech J."/>
            <person name="Harwood C.R."/>
            <person name="Henaut A."/>
            <person name="Hilbert H."/>
            <person name="Holsappel S."/>
            <person name="Hosono S."/>
            <person name="Hullo M.-F."/>
            <person name="Itaya M."/>
            <person name="Jones L.-M."/>
            <person name="Joris B."/>
            <person name="Karamata D."/>
            <person name="Kasahara Y."/>
            <person name="Klaerr-Blanchard M."/>
            <person name="Klein C."/>
            <person name="Kobayashi Y."/>
            <person name="Koetter P."/>
            <person name="Koningstein G."/>
            <person name="Krogh S."/>
            <person name="Kumano M."/>
            <person name="Kurita K."/>
            <person name="Lapidus A."/>
            <person name="Lardinois S."/>
            <person name="Lauber J."/>
            <person name="Lazarevic V."/>
            <person name="Lee S.-M."/>
            <person name="Levine A."/>
            <person name="Liu H."/>
            <person name="Masuda S."/>
            <person name="Mauel C."/>
            <person name="Medigue C."/>
            <person name="Medina N."/>
            <person name="Mellado R.P."/>
            <person name="Mizuno M."/>
            <person name="Moestl D."/>
            <person name="Nakai S."/>
            <person name="Noback M."/>
            <person name="Noone D."/>
            <person name="O'Reilly M."/>
            <person name="Ogawa K."/>
            <person name="Ogiwara A."/>
            <person name="Oudega B."/>
            <person name="Park S.-H."/>
            <person name="Parro V."/>
            <person name="Pohl T.M."/>
            <person name="Portetelle D."/>
            <person name="Porwollik S."/>
            <person name="Prescott A.M."/>
            <person name="Presecan E."/>
            <person name="Pujic P."/>
            <person name="Purnelle B."/>
            <person name="Rapoport G."/>
            <person name="Rey M."/>
            <person name="Reynolds S."/>
            <person name="Rieger M."/>
            <person name="Rivolta C."/>
            <person name="Rocha E."/>
            <person name="Roche B."/>
            <person name="Rose M."/>
            <person name="Sadaie Y."/>
            <person name="Sato T."/>
            <person name="Scanlan E."/>
            <person name="Schleich S."/>
            <person name="Schroeter R."/>
            <person name="Scoffone F."/>
            <person name="Sekiguchi J."/>
            <person name="Sekowska A."/>
            <person name="Seror S.J."/>
            <person name="Serror P."/>
            <person name="Shin B.-S."/>
            <person name="Soldo B."/>
            <person name="Sorokin A."/>
            <person name="Tacconi E."/>
            <person name="Takagi T."/>
            <person name="Takahashi H."/>
            <person name="Takemaru K."/>
            <person name="Takeuchi M."/>
            <person name="Tamakoshi A."/>
            <person name="Tanaka T."/>
            <person name="Terpstra P."/>
            <person name="Tognoni A."/>
            <person name="Tosato V."/>
            <person name="Uchiyama S."/>
            <person name="Vandenbol M."/>
            <person name="Vannier F."/>
            <person name="Vassarotti A."/>
            <person name="Viari A."/>
            <person name="Wambutt R."/>
            <person name="Wedler E."/>
            <person name="Wedler H."/>
            <person name="Weitzenegger T."/>
            <person name="Winters P."/>
            <person name="Wipat A."/>
            <person name="Yamamoto H."/>
            <person name="Yamane K."/>
            <person name="Yasumoto K."/>
            <person name="Yata K."/>
            <person name="Yoshida K."/>
            <person name="Yoshikawa H.-F."/>
            <person name="Zumstein E."/>
            <person name="Yoshikawa H."/>
            <person name="Danchin A."/>
        </authorList>
    </citation>
    <scope>NUCLEOTIDE SEQUENCE [LARGE SCALE GENOMIC DNA]</scope>
    <source>
        <strain>168</strain>
    </source>
</reference>
<reference key="3">
    <citation type="journal article" date="2016" name="J. Proteome Res.">
        <title>Bacillus subtilis spore inner membrane proteome.</title>
        <authorList>
            <person name="Zheng L."/>
            <person name="Abhyankar W."/>
            <person name="Ouwerling N."/>
            <person name="Dekker H.L."/>
            <person name="van Veen H."/>
            <person name="van der Wel N.N."/>
            <person name="Roseboom W."/>
            <person name="de Koning L.J."/>
            <person name="Brul S."/>
            <person name="de Koster C.G."/>
        </authorList>
    </citation>
    <scope>SUBCELLULAR LOCATION</scope>
</reference>
<reference key="4">
    <citation type="journal article" date="2017" name="FEMS Microbiol. Lett.">
        <title>Proteins YlaJ and YhcN contribute to the efficiency of spore germination in Bacillus subtilis.</title>
        <authorList>
            <person name="Johnson C.L."/>
            <person name="Moir A."/>
        </authorList>
    </citation>
    <scope>FUNCTION</scope>
    <scope>DISRUPTION PHENOTYPE</scope>
</reference>
<proteinExistence type="inferred from homology"/>
<organism>
    <name type="scientific">Bacillus subtilis (strain 168)</name>
    <dbReference type="NCBI Taxonomy" id="224308"/>
    <lineage>
        <taxon>Bacteria</taxon>
        <taxon>Bacillati</taxon>
        <taxon>Bacillota</taxon>
        <taxon>Bacilli</taxon>
        <taxon>Bacillales</taxon>
        <taxon>Bacillaceae</taxon>
        <taxon>Bacillus</taxon>
    </lineage>
</organism>
<gene>
    <name type="primary">ylaJ</name>
    <name type="ordered locus">BSU14800</name>
</gene>
<evidence type="ECO:0000255" key="1">
    <source>
        <dbReference type="PROSITE-ProRule" id="PRU00303"/>
    </source>
</evidence>
<evidence type="ECO:0000256" key="2">
    <source>
        <dbReference type="SAM" id="MobiDB-lite"/>
    </source>
</evidence>
<evidence type="ECO:0000269" key="3">
    <source>
    </source>
</evidence>
<evidence type="ECO:0000269" key="4">
    <source>
    </source>
</evidence>
<evidence type="ECO:0000305" key="5"/>
<accession>O07634</accession>
<protein>
    <recommendedName>
        <fullName evidence="5">Probable spore germination lipoprotein YlaJ</fullName>
    </recommendedName>
</protein>